<evidence type="ECO:0000255" key="1"/>
<evidence type="ECO:0000255" key="2">
    <source>
        <dbReference type="PROSITE-ProRule" id="PRU00044"/>
    </source>
</evidence>
<evidence type="ECO:0000256" key="3">
    <source>
        <dbReference type="SAM" id="MobiDB-lite"/>
    </source>
</evidence>
<evidence type="ECO:0000269" key="4">
    <source>
    </source>
</evidence>
<evidence type="ECO:0000269" key="5">
    <source>
    </source>
</evidence>
<evidence type="ECO:0000269" key="6">
    <source>
    </source>
</evidence>
<evidence type="ECO:0000303" key="7">
    <source>
    </source>
</evidence>
<evidence type="ECO:0000305" key="8"/>
<evidence type="ECO:0000312" key="9">
    <source>
        <dbReference type="Proteomes" id="UP000001940"/>
    </source>
</evidence>
<evidence type="ECO:0000312" key="10">
    <source>
        <dbReference type="WormBase" id="Y51A2D.15a"/>
    </source>
</evidence>
<evidence type="ECO:0000312" key="11">
    <source>
        <dbReference type="WormBase" id="Y51A2D.15b"/>
    </source>
</evidence>
<evidence type="ECO:0000312" key="12">
    <source>
        <dbReference type="WormBase" id="Y51A2D.15c"/>
    </source>
</evidence>
<organism evidence="9">
    <name type="scientific">Caenorhabditis elegans</name>
    <dbReference type="NCBI Taxonomy" id="6239"/>
    <lineage>
        <taxon>Eukaryota</taxon>
        <taxon>Metazoa</taxon>
        <taxon>Ecdysozoa</taxon>
        <taxon>Nematoda</taxon>
        <taxon>Chromadorea</taxon>
        <taxon>Rhabditida</taxon>
        <taxon>Rhabditina</taxon>
        <taxon>Rhabditomorpha</taxon>
        <taxon>Rhabditoidea</taxon>
        <taxon>Rhabditidae</taxon>
        <taxon>Peloderinae</taxon>
        <taxon>Caenorhabditis</taxon>
    </lineage>
</organism>
<keyword id="KW-0025">Alternative splicing</keyword>
<keyword id="KW-0966">Cell projection</keyword>
<keyword id="KW-0175">Coiled coil</keyword>
<keyword id="KW-0963">Cytoplasm</keyword>
<keyword id="KW-0206">Cytoskeleton</keyword>
<keyword id="KW-1185">Reference proteome</keyword>
<gene>
    <name evidence="7 10" type="primary">grdn-1</name>
    <name evidence="10" type="ORF">Y51A2D.15</name>
</gene>
<sequence>MKEKHENWSHPLAFWLCDCAAIIPNPATQNFAKNDFLDGLLMLNLMKFINPHFSENEKNGQSLYEELLNQISQFYEKNLDQVIVCKMPEISILESSGEIDEITFEELKKLLLLLLGCAIQSDHKKVFVDRITGFDQTIQAELAACIQKLTESDEIVQNLEDFERRKMKETDEVGGGGGSIEDVDSDDMESSTTSSSNGEIAIKQQDQSFLMSRSTSPTSELRHQTLQIANLQHEMRQMRTQAENRDEECQKLELDNEEKAQKIKILENERLKLVDFKKKWKSVNDDLQEANCKIEKLQNLVGIEKKYREARDGKELYKSKYDIVVKKNLEMEETITTLEKNLKTLQMEMKEKFGVEDNLQRMRNTIDDLEAEISKKNLEIEDFLDEKHRMDREIKELKEIVHQMEVPSTTTTPRIMDSLADQLENAKQDEFEMMKAEIRKLRAQTEGATPETTIIQCNQDLDTLRSQLSTEQHQTAQLHLEIQKMQVEKEQIDGNMERIGIELEEMSAQVENLNLERDEAVKQLLEARRKFGEFQMGQSRDLEEKWSKEVEKSNKISKKCEILEEKLQESDFLLAKSRDEAKKLQFELDEALEETSHVTRSLSSEKNTLKAKLLELQDQVEAQTLELLNQKNCGKRLEDRDQMISNLHNLKNELENDLKTCQTQLELESKKLQRLREDLVLEKSRRADLIGRIHSLCTTLSLNGANFEKINNDDELIDNIDDIMMNALVAVKRERDDLRIQGNQQIQELHDLKRDIEKLRRSESESLNESDDRVRELTRENMHTKEQVFMLQEKLRELNLELSTKNDEIDMVKASIEELNRNSTASCTSNAEIARLQVSIRNSQIQEDLVKQENTKLRDELQEMQKMSKKRSQNLDELENMHKTLLVDHSRLQQLHNLLTRDYDEAKKESMELRQKVQNIPRQQAVFMNANIRELEAKLSEEISRREQLEKEHKMCRIHCENLRRDITELVQTRDELSLELRRAHDTCHNKNNQIDELKKQLNQKISEVNKLSSKIEALSQLNRTYNEENRNLSRQLEILLTQNKELLQRALHDKDQYHLEMKDFQDQLSALRRHKEKLEDKIMDQYRTMENKKSTPERKQPLVKRAAKALINRRRATSNGGSTTEDSSVYSADERSSPPLAGTNEDVDHLPPTCSSSDDHDVISPDFSAKNPLLRSRNDFMGGSVRSPRRYGNDHDGHIYTSPFLPPRVPIRNSPMTSSLRSRPPPPPYNRSPAHKIEQNSSFFEPIAHSTPNSSILEERRVVGEGEKRELVRDKEERIDKTLSYYENVNLPQNPPDLPENSDLKPNESTIWHEYGCV</sequence>
<proteinExistence type="evidence at protein level"/>
<accession>F3Y5P4</accession>
<accession>F3Y5P5</accession>
<accession>Q9XXR1</accession>
<reference evidence="9" key="1">
    <citation type="journal article" date="1998" name="Science">
        <title>Genome sequence of the nematode C. elegans: a platform for investigating biology.</title>
        <authorList>
            <consortium name="The C. elegans sequencing consortium"/>
        </authorList>
    </citation>
    <scope>NUCLEOTIDE SEQUENCE [LARGE SCALE GENOMIC DNA]</scope>
    <source>
        <strain evidence="9">Bristol N2</strain>
    </source>
</reference>
<reference evidence="8" key="2">
    <citation type="journal article" date="2016" name="Dev. Cell">
        <title>A Conserved role for girdin in basal body positioning and ciliogenesis.</title>
        <authorList>
            <person name="Nechipurenko I.V."/>
            <person name="Olivier-Mason A."/>
            <person name="Kazatskaya A."/>
            <person name="Kennedy J."/>
            <person name="McLachlan I.G."/>
            <person name="Heiman M.G."/>
            <person name="Blacque O.E."/>
            <person name="Sengupta P."/>
        </authorList>
    </citation>
    <scope>FUNCTION</scope>
    <scope>SUBCELLULAR LOCATION</scope>
    <scope>DEVELOPMENTAL STAGE</scope>
    <scope>DOMAIN</scope>
    <scope>DISRUPTION PHENOTYPE</scope>
    <scope>MUTAGENESIS OF SER-1095</scope>
</reference>
<reference key="3">
    <citation type="journal article" date="2020" name="Development">
        <title>Dendrites with specialized glial attachments develop by retrograde extension using SAX-7 and GRDN-1.</title>
        <authorList>
            <person name="Cebul E.R."/>
            <person name="McLachlan I.G."/>
            <person name="Heiman M.G."/>
        </authorList>
    </citation>
    <scope>FUNCTION</scope>
    <scope>SUBCELLULAR LOCATION</scope>
    <scope>DEVELOPMENTAL STAGE</scope>
    <scope>MUTAGENESIS OF 8-TRP--VAL-1319; 73-GLN--VAL-1319; 1043-GLN--VAL-1319; 1068-GLN--VAL-1319 AND 1294-GLN--VAL-1319</scope>
</reference>
<reference key="4">
    <citation type="journal article" date="2021" name="Dev. Biol.">
        <title>GRDN-1/Girdin regulates dendrite morphogenesis and cilium position in two specialized sensory neuron types in C. elegans.</title>
        <authorList>
            <person name="Nechipurenko I."/>
            <person name="Lavrentyeva S."/>
            <person name="Sengupta P."/>
        </authorList>
    </citation>
    <scope>FUNCTION</scope>
    <scope>SUBCELLULAR LOCATION</scope>
    <scope>TISSUE SPECIFICITY</scope>
    <scope>MUTAGENESIS OF 8-TRP--VAL-1319 AND 1068-GLN--VAL-1319</scope>
</reference>
<comment type="function">
    <text evidence="4 5 6">Scaffolding protein that plays a role in ciliogenesis, cilium positioning and dendrite anchoring in sensory amphid neurons including AWB, AWA, AWC, ADL and ASI, the phasmid neurons PHA and PHB and the gas sensing neurons AQR, PQR, URX and BAG (PubMed:27623382, PubMed:31988188). Its role in cilium positioning may be through regulation of the localization of cell adhesion proteins such as the apical junction protein ajm-1, and the ciliary scaffolding protein Rootletin/che-10 (PubMed:27623382). Plays a more prominent role in regulating dendrite morphogenesis in AQR than in PQR neurons (PubMed:33460640). Regulates localization of hmr-1 to the distal AQR dendrite (PubMed:33460640). During embryonic elongation, required for the anchoring of URX and BAG dendrites to the presumptive nose (PubMed:31988188).</text>
</comment>
<comment type="subcellular location">
    <molecule>Isoform a</molecule>
    <subcellularLocation>
        <location evidence="4 6">Cytoplasm</location>
        <location evidence="4 6">Cytoskeleton</location>
        <location evidence="4 6">Cilium basal body</location>
    </subcellularLocation>
    <subcellularLocation>
        <location evidence="4 6">Cytoplasm</location>
        <location evidence="4 6">Cytoskeleton</location>
        <location evidence="4 6">Microtubule organizing center</location>
        <location evidence="4 6">Centrosome</location>
        <location evidence="4 6">Centriole</location>
    </subcellularLocation>
    <text evidence="4 5 6">Enriched at the proximal ends of centrioles (PubMed:27623382). Localizes to the cilium basal body in AQR and PQR sensory neurons (PubMed:33460640). Localizes to the cilium basal body in the outgrowing AQR dendrite (PubMed:33460640). Localizes to puncta near dendrite contacts in the nose (PubMed:31988188).</text>
</comment>
<comment type="alternative products">
    <event type="alternative splicing"/>
    <isoform>
        <id>F3Y5P4-1</id>
        <name evidence="10">a</name>
        <sequence type="displayed"/>
    </isoform>
    <isoform>
        <id>F3Y5P4-2</id>
        <name evidence="11">b</name>
        <sequence type="described" ref="VSP_058703 VSP_058704"/>
    </isoform>
    <isoform>
        <id>F3Y5P4-3</id>
        <name evidence="12">c</name>
        <sequence type="described" ref="VSP_058702"/>
    </isoform>
</comment>
<comment type="tissue specificity">
    <molecule>Isoform a</molecule>
    <text evidence="6">Expressed in AQR and PQR gas-sensing neurons in hermaphrodites (at protein level).</text>
</comment>
<comment type="developmental stage">
    <molecule>Isoform a</molecule>
    <text evidence="4 5">Expressed in the embryo from late gastrulation onwards (PubMed:31988188). Broadly expressed during embryogenesis with high expression at the presumptive nose during the 1.5-fold stage of embryogenesis (PubMed:27623382). Expressed in AWB sensory neurons in larvae and in PHA/PHB tail neurons at the L1 stage of larval development (PubMed:27623382).</text>
</comment>
<comment type="domain">
    <text evidence="4">The C-terminal domain is required for localization to the cilium basal body and role in ciliogenesis.</text>
</comment>
<comment type="disruption phenotype">
    <text evidence="4">Embryonic lethal with few malformed larvae that develop to the L1 stage of larval development.</text>
</comment>
<comment type="similarity">
    <text evidence="8">Belongs to the CCDC88 family.</text>
</comment>
<name>GRDN_CAEEL</name>
<protein>
    <recommendedName>
        <fullName evidence="10">Girdin homolog</fullName>
    </recommendedName>
    <alternativeName>
        <fullName evidence="8">Coiled-coil domain-containing protein grdn-1</fullName>
    </alternativeName>
</protein>
<feature type="chain" id="PRO_0000438682" description="Girdin homolog" evidence="8">
    <location>
        <begin position="1"/>
        <end position="1319"/>
    </location>
</feature>
<feature type="domain" description="Calponin-homology (CH)" evidence="2">
    <location>
        <begin position="6"/>
        <end position="118"/>
    </location>
</feature>
<feature type="region of interest" description="Disordered" evidence="3">
    <location>
        <begin position="166"/>
        <end position="222"/>
    </location>
</feature>
<feature type="region of interest" description="Disordered" evidence="3">
    <location>
        <begin position="1112"/>
        <end position="1236"/>
    </location>
</feature>
<feature type="region of interest" description="Disordered" evidence="3">
    <location>
        <begin position="1289"/>
        <end position="1308"/>
    </location>
</feature>
<feature type="coiled-coil region" evidence="1">
    <location>
        <begin position="141"/>
        <end position="173"/>
    </location>
</feature>
<feature type="coiled-coil region" evidence="1">
    <location>
        <begin position="218"/>
        <end position="690"/>
    </location>
</feature>
<feature type="coiled-coil region" evidence="1">
    <location>
        <begin position="732"/>
        <end position="1096"/>
    </location>
</feature>
<feature type="compositionally biased region" description="Polar residues" evidence="3">
    <location>
        <begin position="204"/>
        <end position="222"/>
    </location>
</feature>
<feature type="compositionally biased region" description="Polar residues" evidence="3">
    <location>
        <begin position="1118"/>
        <end position="1131"/>
    </location>
</feature>
<feature type="splice variant" id="VSP_058702" description="In isoform c." evidence="8">
    <location>
        <begin position="1"/>
        <end position="166"/>
    </location>
</feature>
<feature type="splice variant" id="VSP_058703" description="In isoform b." evidence="8">
    <original>TNEDVDHLPPTCSSSDDHDVISPDFSAKNPLLRSRNDFMGGSVRSPRRYGNDHDGHIYTSPFLPPRVPIRNSPMTSSLR</original>
    <variation>NSTCSVSTSSDSTPDECPLHGSRSFSKISALKIQSSPSPSSSFSRFLSLRRTAKPSLLQGAYTNPNVRKMIDYHYNCSD</variation>
    <location>
        <begin position="1144"/>
        <end position="1222"/>
    </location>
</feature>
<feature type="splice variant" id="VSP_058704" description="In isoform b." evidence="8">
    <location>
        <begin position="1223"/>
        <end position="1319"/>
    </location>
</feature>
<feature type="mutagenesis site" description="In ns303; defective dendrite extension of AWA, AWB, URX and BAG sensory neurons. Disrupts the retrograde extension of URX and BAG dendrites during embryo elongation, whereby URX and BAG dendrite endings become displaced from the nose and fail to extend normally. Defective cilium basal body positioning in AQR sensory neurons. AQR and PQR dendrite morphology defects including misrouted dendrites which extended posteriorly. Multipolar and unipolar AQR morphology. Dendrites and axons arise from a common process instead of opposites poles of the soma. Truncated dendrites. Dendrite defects are more severe in AQR neurons than PQR neurons. No defects in axon morphology. Disrupts hmr-1 localization to distal AQR dendrites. Instead hmr-1 is diffusely distributed, absent or it aberrantly localizes to the AQR cell body." evidence="5 6">
    <location>
        <begin position="8"/>
        <end position="1319"/>
    </location>
</feature>
<feature type="mutagenesis site" description="In hmn7; dendrites of URX and BAG sensory neurons fail to extend." evidence="5">
    <location>
        <begin position="73"/>
        <end position="1319"/>
    </location>
</feature>
<feature type="mutagenesis site" description="In hmn4; dendrites of URX and BAG sensory neurons fail to extend." evidence="5">
    <location>
        <begin position="1043"/>
        <end position="1319"/>
    </location>
</feature>
<feature type="mutagenesis site" description="In hmn1; dendrites of URX and BAG sensory neurons fail to extend. Defective cilium basal body positioning in AQR sensory neurons sometimes resulting in cilia assembling at ectopic cellular locations such as the soma and proximal axons. AQR and PQR dendrite morphology defects including misrouted dendrites which extended posteriorly. Multipolar and unipolar AQR morphology. Dendrites and axons arise from a common process instead of opposites poles of the soma. Truncated dendrites. Dendrite defects are more severe in AQR neurons than PQR neurons. No defects in axon morphology. Disrupts hmr-1 localization to distal AQR dendrites. Instead hmr-1 is diffusely distributed, absent or it aberrantly localizes to the AQR cell body." evidence="5 6">
    <location>
        <begin position="1068"/>
        <end position="1319"/>
    </location>
</feature>
<feature type="mutagenesis site" description="Ciliary defects in the AWB sensory neuron." evidence="4">
    <original>S</original>
    <variation>A</variation>
    <location>
        <position position="1095"/>
    </location>
</feature>
<feature type="mutagenesis site" description="In hmn8; dendrites of URX and BAG sensory neurons fail to extend." evidence="5">
    <location>
        <begin position="1294"/>
        <end position="1319"/>
    </location>
</feature>
<dbReference type="EMBL" id="BX284605">
    <property type="protein sequence ID" value="CAA16402.2"/>
    <property type="molecule type" value="Genomic_DNA"/>
</dbReference>
<dbReference type="EMBL" id="BX284605">
    <property type="protein sequence ID" value="CCA65668.1"/>
    <property type="molecule type" value="Genomic_DNA"/>
</dbReference>
<dbReference type="EMBL" id="BX284605">
    <property type="protein sequence ID" value="CCA65669.1"/>
    <property type="molecule type" value="Genomic_DNA"/>
</dbReference>
<dbReference type="PIR" id="T27074">
    <property type="entry name" value="T27074"/>
</dbReference>
<dbReference type="RefSeq" id="NP_001256816.1">
    <molecule id="F3Y5P4-1"/>
    <property type="nucleotide sequence ID" value="NM_001269887.4"/>
</dbReference>
<dbReference type="RefSeq" id="NP_001256817.1">
    <property type="nucleotide sequence ID" value="NM_001269888.1"/>
</dbReference>
<dbReference type="RefSeq" id="NP_001256818.1">
    <molecule id="F3Y5P4-3"/>
    <property type="nucleotide sequence ID" value="NM_001269889.3"/>
</dbReference>
<dbReference type="RefSeq" id="NP_001359512.1">
    <molecule id="F3Y5P4-2"/>
    <property type="nucleotide sequence ID" value="NM_001373186.2"/>
</dbReference>
<dbReference type="SMR" id="F3Y5P4"/>
<dbReference type="DIP" id="DIP-26318N"/>
<dbReference type="FunCoup" id="F3Y5P4">
    <property type="interactions" value="1890"/>
</dbReference>
<dbReference type="IntAct" id="F3Y5P4">
    <property type="interactions" value="1"/>
</dbReference>
<dbReference type="STRING" id="6239.Y51A2D.15a.1"/>
<dbReference type="PaxDb" id="6239-Y51A2D.15a"/>
<dbReference type="PeptideAtlas" id="F3Y5P4"/>
<dbReference type="EnsemblMetazoa" id="Y51A2D.15a.1">
    <molecule id="F3Y5P4-1"/>
    <property type="protein sequence ID" value="Y51A2D.15a.1"/>
    <property type="gene ID" value="WBGene00013082"/>
</dbReference>
<dbReference type="EnsemblMetazoa" id="Y51A2D.15b.1">
    <molecule id="F3Y5P4-2"/>
    <property type="protein sequence ID" value="Y51A2D.15b.1"/>
    <property type="gene ID" value="WBGene00013082"/>
</dbReference>
<dbReference type="EnsemblMetazoa" id="Y51A2D.15c.1">
    <molecule id="F3Y5P4-3"/>
    <property type="protein sequence ID" value="Y51A2D.15c.1"/>
    <property type="gene ID" value="WBGene00013082"/>
</dbReference>
<dbReference type="GeneID" id="190137"/>
<dbReference type="KEGG" id="cel:CELE_Y51A2D.15"/>
<dbReference type="UCSC" id="Y51A2D.15">
    <property type="organism name" value="c. elegans"/>
</dbReference>
<dbReference type="AGR" id="WB:WBGene00013082"/>
<dbReference type="CTD" id="190137"/>
<dbReference type="WormBase" id="Y51A2D.15a">
    <molecule id="F3Y5P4-1"/>
    <property type="protein sequence ID" value="CE46096"/>
    <property type="gene ID" value="WBGene00013082"/>
    <property type="gene designation" value="grdn-1"/>
</dbReference>
<dbReference type="WormBase" id="Y51A2D.15b">
    <molecule id="F3Y5P4-2"/>
    <property type="protein sequence ID" value="CE32531"/>
    <property type="gene ID" value="WBGene00013082"/>
    <property type="gene designation" value="grdn-1"/>
</dbReference>
<dbReference type="WormBase" id="Y51A2D.15c">
    <molecule id="F3Y5P4-3"/>
    <property type="protein sequence ID" value="CE46015"/>
    <property type="gene ID" value="WBGene00013082"/>
    <property type="gene designation" value="grdn-1"/>
</dbReference>
<dbReference type="eggNOG" id="KOG4643">
    <property type="taxonomic scope" value="Eukaryota"/>
</dbReference>
<dbReference type="GeneTree" id="ENSGT00940000168948"/>
<dbReference type="InParanoid" id="F3Y5P4"/>
<dbReference type="OMA" id="HRNSFQG"/>
<dbReference type="OrthoDB" id="10254988at2759"/>
<dbReference type="PhylomeDB" id="F3Y5P4"/>
<dbReference type="PRO" id="PR:F3Y5P4"/>
<dbReference type="Proteomes" id="UP000001940">
    <property type="component" value="Chromosome V"/>
</dbReference>
<dbReference type="Bgee" id="WBGene00013082">
    <property type="expression patterns" value="Expressed in pharyngeal muscle cell (C elegans) and 3 other cell types or tissues"/>
</dbReference>
<dbReference type="GO" id="GO:0005814">
    <property type="term" value="C:centriole"/>
    <property type="evidence" value="ECO:0000314"/>
    <property type="project" value="UniProtKB"/>
</dbReference>
<dbReference type="GO" id="GO:0005813">
    <property type="term" value="C:centrosome"/>
    <property type="evidence" value="ECO:0000318"/>
    <property type="project" value="GO_Central"/>
</dbReference>
<dbReference type="GO" id="GO:0036064">
    <property type="term" value="C:ciliary basal body"/>
    <property type="evidence" value="ECO:0000314"/>
    <property type="project" value="UniProtKB"/>
</dbReference>
<dbReference type="GO" id="GO:0005737">
    <property type="term" value="C:cytoplasm"/>
    <property type="evidence" value="ECO:0000318"/>
    <property type="project" value="GO_Central"/>
</dbReference>
<dbReference type="GO" id="GO:0051959">
    <property type="term" value="F:dynein light intermediate chain binding"/>
    <property type="evidence" value="ECO:0000318"/>
    <property type="project" value="GO_Central"/>
</dbReference>
<dbReference type="GO" id="GO:0008017">
    <property type="term" value="F:microtubule binding"/>
    <property type="evidence" value="ECO:0000318"/>
    <property type="project" value="GO_Central"/>
</dbReference>
<dbReference type="GO" id="GO:0003391">
    <property type="term" value="P:amphid sensory organ dendrite retrograde extension"/>
    <property type="evidence" value="ECO:0000315"/>
    <property type="project" value="UniProtKB"/>
</dbReference>
<dbReference type="GO" id="GO:0032053">
    <property type="term" value="P:ciliary basal body organization"/>
    <property type="evidence" value="ECO:0000315"/>
    <property type="project" value="UniProtKB"/>
</dbReference>
<dbReference type="GO" id="GO:1905349">
    <property type="term" value="P:ciliary transition zone assembly"/>
    <property type="evidence" value="ECO:0000315"/>
    <property type="project" value="UniProtKB"/>
</dbReference>
<dbReference type="GO" id="GO:0031122">
    <property type="term" value="P:cytoplasmic microtubule organization"/>
    <property type="evidence" value="ECO:0000318"/>
    <property type="project" value="GO_Central"/>
</dbReference>
<dbReference type="GO" id="GO:0030705">
    <property type="term" value="P:cytoskeleton-dependent intracellular transport"/>
    <property type="evidence" value="ECO:0000318"/>
    <property type="project" value="GO_Central"/>
</dbReference>
<dbReference type="GO" id="GO:0045724">
    <property type="term" value="P:positive regulation of cilium assembly"/>
    <property type="evidence" value="ECO:0000315"/>
    <property type="project" value="UniProtKB"/>
</dbReference>
<dbReference type="GO" id="GO:1903861">
    <property type="term" value="P:positive regulation of dendrite extension"/>
    <property type="evidence" value="ECO:0000315"/>
    <property type="project" value="UniProtKB"/>
</dbReference>
<dbReference type="GO" id="GO:0050775">
    <property type="term" value="P:positive regulation of dendrite morphogenesis"/>
    <property type="evidence" value="ECO:0000315"/>
    <property type="project" value="UniProtKB"/>
</dbReference>
<dbReference type="GO" id="GO:1903566">
    <property type="term" value="P:positive regulation of protein localization to cilium"/>
    <property type="evidence" value="ECO:0000315"/>
    <property type="project" value="UniProtKB"/>
</dbReference>
<dbReference type="GO" id="GO:1904491">
    <property type="term" value="P:protein localization to ciliary transition zone"/>
    <property type="evidence" value="ECO:0000315"/>
    <property type="project" value="UniProtKB"/>
</dbReference>
<dbReference type="Gene3D" id="1.10.418.10">
    <property type="entry name" value="Calponin-like domain"/>
    <property type="match status" value="1"/>
</dbReference>
<dbReference type="InterPro" id="IPR001715">
    <property type="entry name" value="CH_dom"/>
</dbReference>
<dbReference type="InterPro" id="IPR036872">
    <property type="entry name" value="CH_dom_sf"/>
</dbReference>
<dbReference type="InterPro" id="IPR043936">
    <property type="entry name" value="HOOK_N"/>
</dbReference>
<dbReference type="PANTHER" id="PTHR18947:SF28">
    <property type="entry name" value="GIRDIN, ISOFORM A"/>
    <property type="match status" value="1"/>
</dbReference>
<dbReference type="PANTHER" id="PTHR18947">
    <property type="entry name" value="HOOK PROTEINS"/>
    <property type="match status" value="1"/>
</dbReference>
<dbReference type="Pfam" id="PF19047">
    <property type="entry name" value="HOOK_N"/>
    <property type="match status" value="1"/>
</dbReference>
<dbReference type="SUPFAM" id="SSF116907">
    <property type="entry name" value="Hook domain"/>
    <property type="match status" value="1"/>
</dbReference>
<dbReference type="PROSITE" id="PS50021">
    <property type="entry name" value="CH"/>
    <property type="match status" value="1"/>
</dbReference>